<dbReference type="EMBL" id="CP000569">
    <property type="protein sequence ID" value="ABN73672.1"/>
    <property type="molecule type" value="Genomic_DNA"/>
</dbReference>
<dbReference type="RefSeq" id="WP_005596791.1">
    <property type="nucleotide sequence ID" value="NC_009053.1"/>
</dbReference>
<dbReference type="SMR" id="A3MZT6"/>
<dbReference type="STRING" id="416269.APL_0570"/>
<dbReference type="EnsemblBacteria" id="ABN73672">
    <property type="protein sequence ID" value="ABN73672"/>
    <property type="gene ID" value="APL_0570"/>
</dbReference>
<dbReference type="GeneID" id="48598758"/>
<dbReference type="KEGG" id="apl:APL_0570"/>
<dbReference type="eggNOG" id="COG0233">
    <property type="taxonomic scope" value="Bacteria"/>
</dbReference>
<dbReference type="HOGENOM" id="CLU_073981_2_0_6"/>
<dbReference type="Proteomes" id="UP000001432">
    <property type="component" value="Chromosome"/>
</dbReference>
<dbReference type="GO" id="GO:0005829">
    <property type="term" value="C:cytosol"/>
    <property type="evidence" value="ECO:0007669"/>
    <property type="project" value="GOC"/>
</dbReference>
<dbReference type="GO" id="GO:0043023">
    <property type="term" value="F:ribosomal large subunit binding"/>
    <property type="evidence" value="ECO:0007669"/>
    <property type="project" value="TreeGrafter"/>
</dbReference>
<dbReference type="GO" id="GO:0002184">
    <property type="term" value="P:cytoplasmic translational termination"/>
    <property type="evidence" value="ECO:0007669"/>
    <property type="project" value="TreeGrafter"/>
</dbReference>
<dbReference type="CDD" id="cd00520">
    <property type="entry name" value="RRF"/>
    <property type="match status" value="1"/>
</dbReference>
<dbReference type="FunFam" id="1.10.132.20:FF:000001">
    <property type="entry name" value="Ribosome-recycling factor"/>
    <property type="match status" value="1"/>
</dbReference>
<dbReference type="FunFam" id="3.30.1360.40:FF:000001">
    <property type="entry name" value="Ribosome-recycling factor"/>
    <property type="match status" value="1"/>
</dbReference>
<dbReference type="Gene3D" id="3.30.1360.40">
    <property type="match status" value="1"/>
</dbReference>
<dbReference type="Gene3D" id="1.10.132.20">
    <property type="entry name" value="Ribosome-recycling factor"/>
    <property type="match status" value="1"/>
</dbReference>
<dbReference type="HAMAP" id="MF_00040">
    <property type="entry name" value="RRF"/>
    <property type="match status" value="1"/>
</dbReference>
<dbReference type="InterPro" id="IPR002661">
    <property type="entry name" value="Ribosome_recyc_fac"/>
</dbReference>
<dbReference type="InterPro" id="IPR023584">
    <property type="entry name" value="Ribosome_recyc_fac_dom"/>
</dbReference>
<dbReference type="InterPro" id="IPR036191">
    <property type="entry name" value="RRF_sf"/>
</dbReference>
<dbReference type="NCBIfam" id="TIGR00496">
    <property type="entry name" value="frr"/>
    <property type="match status" value="1"/>
</dbReference>
<dbReference type="PANTHER" id="PTHR20982:SF3">
    <property type="entry name" value="MITOCHONDRIAL RIBOSOME RECYCLING FACTOR PSEUDO 1"/>
    <property type="match status" value="1"/>
</dbReference>
<dbReference type="PANTHER" id="PTHR20982">
    <property type="entry name" value="RIBOSOME RECYCLING FACTOR"/>
    <property type="match status" value="1"/>
</dbReference>
<dbReference type="Pfam" id="PF01765">
    <property type="entry name" value="RRF"/>
    <property type="match status" value="1"/>
</dbReference>
<dbReference type="SUPFAM" id="SSF55194">
    <property type="entry name" value="Ribosome recycling factor, RRF"/>
    <property type="match status" value="1"/>
</dbReference>
<proteinExistence type="inferred from homology"/>
<reference key="1">
    <citation type="journal article" date="2008" name="J. Bacteriol.">
        <title>The complete genome sequence of Actinobacillus pleuropneumoniae L20 (serotype 5b).</title>
        <authorList>
            <person name="Foote S.J."/>
            <person name="Bosse J.T."/>
            <person name="Bouevitch A.B."/>
            <person name="Langford P.R."/>
            <person name="Young N.M."/>
            <person name="Nash J.H.E."/>
        </authorList>
    </citation>
    <scope>NUCLEOTIDE SEQUENCE [LARGE SCALE GENOMIC DNA]</scope>
    <source>
        <strain>L20</strain>
    </source>
</reference>
<protein>
    <recommendedName>
        <fullName evidence="1">Ribosome-recycling factor</fullName>
        <shortName evidence="1">RRF</shortName>
    </recommendedName>
    <alternativeName>
        <fullName evidence="1">Ribosome-releasing factor</fullName>
    </alternativeName>
</protein>
<organism>
    <name type="scientific">Actinobacillus pleuropneumoniae serotype 5b (strain L20)</name>
    <dbReference type="NCBI Taxonomy" id="416269"/>
    <lineage>
        <taxon>Bacteria</taxon>
        <taxon>Pseudomonadati</taxon>
        <taxon>Pseudomonadota</taxon>
        <taxon>Gammaproteobacteria</taxon>
        <taxon>Pasteurellales</taxon>
        <taxon>Pasteurellaceae</taxon>
        <taxon>Actinobacillus</taxon>
    </lineage>
</organism>
<name>RRF_ACTP2</name>
<accession>A3MZT6</accession>
<keyword id="KW-0963">Cytoplasm</keyword>
<keyword id="KW-0648">Protein biosynthesis</keyword>
<keyword id="KW-1185">Reference proteome</keyword>
<gene>
    <name evidence="1" type="primary">frr</name>
    <name type="ordered locus">APL_0570</name>
</gene>
<feature type="chain" id="PRO_1000003098" description="Ribosome-recycling factor">
    <location>
        <begin position="1"/>
        <end position="185"/>
    </location>
</feature>
<evidence type="ECO:0000255" key="1">
    <source>
        <dbReference type="HAMAP-Rule" id="MF_00040"/>
    </source>
</evidence>
<sequence>MINEIKKDTQDRMEKSLEALKSHISKIRTGRAQPSLLDGIQVEYYGSATPLRQLANVVAEDARTLAVNVFDRSLISAVEKAILTSDLGLNPSSAGATIRVPLPPLTEERRRDLIKIVKGEGEQGKIAIRNVRRDANDQIKALLKDKEISEDEERKAQDEIQKITDGYVKKVDEVLAAKEKELLDF</sequence>
<comment type="function">
    <text evidence="1">Responsible for the release of ribosomes from messenger RNA at the termination of protein biosynthesis. May increase the efficiency of translation by recycling ribosomes from one round of translation to another.</text>
</comment>
<comment type="subcellular location">
    <subcellularLocation>
        <location evidence="1">Cytoplasm</location>
    </subcellularLocation>
</comment>
<comment type="similarity">
    <text evidence="1">Belongs to the RRF family.</text>
</comment>